<organism>
    <name type="scientific">Staphylococcus aureus (strain MRSA252)</name>
    <dbReference type="NCBI Taxonomy" id="282458"/>
    <lineage>
        <taxon>Bacteria</taxon>
        <taxon>Bacillati</taxon>
        <taxon>Bacillota</taxon>
        <taxon>Bacilli</taxon>
        <taxon>Bacillales</taxon>
        <taxon>Staphylococcaceae</taxon>
        <taxon>Staphylococcus</taxon>
    </lineage>
</organism>
<reference key="1">
    <citation type="journal article" date="2004" name="Proc. Natl. Acad. Sci. U.S.A.">
        <title>Complete genomes of two clinical Staphylococcus aureus strains: evidence for the rapid evolution of virulence and drug resistance.</title>
        <authorList>
            <person name="Holden M.T.G."/>
            <person name="Feil E.J."/>
            <person name="Lindsay J.A."/>
            <person name="Peacock S.J."/>
            <person name="Day N.P.J."/>
            <person name="Enright M.C."/>
            <person name="Foster T.J."/>
            <person name="Moore C.E."/>
            <person name="Hurst L."/>
            <person name="Atkin R."/>
            <person name="Barron A."/>
            <person name="Bason N."/>
            <person name="Bentley S.D."/>
            <person name="Chillingworth C."/>
            <person name="Chillingworth T."/>
            <person name="Churcher C."/>
            <person name="Clark L."/>
            <person name="Corton C."/>
            <person name="Cronin A."/>
            <person name="Doggett J."/>
            <person name="Dowd L."/>
            <person name="Feltwell T."/>
            <person name="Hance Z."/>
            <person name="Harris B."/>
            <person name="Hauser H."/>
            <person name="Holroyd S."/>
            <person name="Jagels K."/>
            <person name="James K.D."/>
            <person name="Lennard N."/>
            <person name="Line A."/>
            <person name="Mayes R."/>
            <person name="Moule S."/>
            <person name="Mungall K."/>
            <person name="Ormond D."/>
            <person name="Quail M.A."/>
            <person name="Rabbinowitsch E."/>
            <person name="Rutherford K.M."/>
            <person name="Sanders M."/>
            <person name="Sharp S."/>
            <person name="Simmonds M."/>
            <person name="Stevens K."/>
            <person name="Whitehead S."/>
            <person name="Barrell B.G."/>
            <person name="Spratt B.G."/>
            <person name="Parkhill J."/>
        </authorList>
    </citation>
    <scope>NUCLEOTIDE SEQUENCE [LARGE SCALE GENOMIC DNA]</scope>
    <source>
        <strain>MRSA252</strain>
    </source>
</reference>
<proteinExistence type="inferred from homology"/>
<name>ISPT_STAAR</name>
<evidence type="ECO:0000255" key="1">
    <source>
        <dbReference type="HAMAP-Rule" id="MF_01139"/>
    </source>
</evidence>
<feature type="chain" id="PRO_0000123674" description="Isoprenyl transferase">
    <location>
        <begin position="1"/>
        <end position="256"/>
    </location>
</feature>
<feature type="active site" evidence="1">
    <location>
        <position position="33"/>
    </location>
</feature>
<feature type="active site" description="Proton acceptor" evidence="1">
    <location>
        <position position="81"/>
    </location>
</feature>
<feature type="binding site" evidence="1">
    <location>
        <position position="33"/>
    </location>
    <ligand>
        <name>Mg(2+)</name>
        <dbReference type="ChEBI" id="CHEBI:18420"/>
    </ligand>
</feature>
<feature type="binding site" evidence="1">
    <location>
        <begin position="34"/>
        <end position="37"/>
    </location>
    <ligand>
        <name>substrate</name>
    </ligand>
</feature>
<feature type="binding site" evidence="1">
    <location>
        <position position="38"/>
    </location>
    <ligand>
        <name>substrate</name>
    </ligand>
</feature>
<feature type="binding site" evidence="1">
    <location>
        <position position="46"/>
    </location>
    <ligand>
        <name>substrate</name>
    </ligand>
</feature>
<feature type="binding site" evidence="1">
    <location>
        <position position="50"/>
    </location>
    <ligand>
        <name>substrate</name>
    </ligand>
</feature>
<feature type="binding site" evidence="1">
    <location>
        <begin position="78"/>
        <end position="80"/>
    </location>
    <ligand>
        <name>substrate</name>
    </ligand>
</feature>
<feature type="binding site" evidence="1">
    <location>
        <position position="82"/>
    </location>
    <ligand>
        <name>substrate</name>
    </ligand>
</feature>
<feature type="binding site" evidence="1">
    <location>
        <position position="84"/>
    </location>
    <ligand>
        <name>substrate</name>
    </ligand>
</feature>
<feature type="binding site" evidence="1">
    <location>
        <position position="201"/>
    </location>
    <ligand>
        <name>substrate</name>
    </ligand>
</feature>
<feature type="binding site" evidence="1">
    <location>
        <begin position="207"/>
        <end position="209"/>
    </location>
    <ligand>
        <name>substrate</name>
    </ligand>
</feature>
<feature type="binding site" evidence="1">
    <location>
        <position position="220"/>
    </location>
    <ligand>
        <name>Mg(2+)</name>
        <dbReference type="ChEBI" id="CHEBI:18420"/>
    </ligand>
</feature>
<keyword id="KW-0460">Magnesium</keyword>
<keyword id="KW-0479">Metal-binding</keyword>
<keyword id="KW-0808">Transferase</keyword>
<comment type="function">
    <text evidence="1">Catalyzes the condensation of isopentenyl diphosphate (IPP) with allylic pyrophosphates generating different type of terpenoids.</text>
</comment>
<comment type="cofactor">
    <cofactor evidence="1">
        <name>Mg(2+)</name>
        <dbReference type="ChEBI" id="CHEBI:18420"/>
    </cofactor>
    <text evidence="1">Binds 2 magnesium ions per subunit.</text>
</comment>
<comment type="subunit">
    <text evidence="1">Homodimer.</text>
</comment>
<comment type="similarity">
    <text evidence="1">Belongs to the UPP synthase family.</text>
</comment>
<protein>
    <recommendedName>
        <fullName evidence="1">Isoprenyl transferase</fullName>
        <ecNumber evidence="1">2.5.1.-</ecNumber>
    </recommendedName>
</protein>
<dbReference type="EC" id="2.5.1.-" evidence="1"/>
<dbReference type="EMBL" id="BX571856">
    <property type="protein sequence ID" value="CAG40238.1"/>
    <property type="molecule type" value="Genomic_DNA"/>
</dbReference>
<dbReference type="RefSeq" id="WP_000473705.1">
    <property type="nucleotide sequence ID" value="NC_002952.2"/>
</dbReference>
<dbReference type="SMR" id="Q6GHH5"/>
<dbReference type="KEGG" id="sar:SAR1236"/>
<dbReference type="HOGENOM" id="CLU_038505_1_1_9"/>
<dbReference type="BRENDA" id="2.5.1.31">
    <property type="organism ID" value="3352"/>
</dbReference>
<dbReference type="Proteomes" id="UP000000596">
    <property type="component" value="Chromosome"/>
</dbReference>
<dbReference type="GO" id="GO:0005829">
    <property type="term" value="C:cytosol"/>
    <property type="evidence" value="ECO:0007669"/>
    <property type="project" value="TreeGrafter"/>
</dbReference>
<dbReference type="GO" id="GO:0008834">
    <property type="term" value="F:ditrans,polycis-undecaprenyl-diphosphate synthase [(2E,6E)-farnesyl-diphosphate specific] activity"/>
    <property type="evidence" value="ECO:0007669"/>
    <property type="project" value="TreeGrafter"/>
</dbReference>
<dbReference type="GO" id="GO:0000287">
    <property type="term" value="F:magnesium ion binding"/>
    <property type="evidence" value="ECO:0007669"/>
    <property type="project" value="UniProtKB-UniRule"/>
</dbReference>
<dbReference type="GO" id="GO:0030145">
    <property type="term" value="F:manganese ion binding"/>
    <property type="evidence" value="ECO:0007669"/>
    <property type="project" value="TreeGrafter"/>
</dbReference>
<dbReference type="GO" id="GO:0016094">
    <property type="term" value="P:polyprenol biosynthetic process"/>
    <property type="evidence" value="ECO:0007669"/>
    <property type="project" value="TreeGrafter"/>
</dbReference>
<dbReference type="CDD" id="cd00475">
    <property type="entry name" value="Cis_IPPS"/>
    <property type="match status" value="1"/>
</dbReference>
<dbReference type="FunFam" id="3.40.1180.10:FF:000001">
    <property type="entry name" value="(2E,6E)-farnesyl-diphosphate-specific ditrans,polycis-undecaprenyl-diphosphate synthase"/>
    <property type="match status" value="1"/>
</dbReference>
<dbReference type="Gene3D" id="3.40.1180.10">
    <property type="entry name" value="Decaprenyl diphosphate synthase-like"/>
    <property type="match status" value="1"/>
</dbReference>
<dbReference type="HAMAP" id="MF_01139">
    <property type="entry name" value="ISPT"/>
    <property type="match status" value="1"/>
</dbReference>
<dbReference type="InterPro" id="IPR001441">
    <property type="entry name" value="UPP_synth-like"/>
</dbReference>
<dbReference type="InterPro" id="IPR018520">
    <property type="entry name" value="UPP_synth-like_CS"/>
</dbReference>
<dbReference type="InterPro" id="IPR036424">
    <property type="entry name" value="UPP_synth-like_sf"/>
</dbReference>
<dbReference type="NCBIfam" id="NF011405">
    <property type="entry name" value="PRK14830.1"/>
    <property type="match status" value="1"/>
</dbReference>
<dbReference type="NCBIfam" id="TIGR00055">
    <property type="entry name" value="uppS"/>
    <property type="match status" value="1"/>
</dbReference>
<dbReference type="PANTHER" id="PTHR10291:SF0">
    <property type="entry name" value="DEHYDRODOLICHYL DIPHOSPHATE SYNTHASE 2"/>
    <property type="match status" value="1"/>
</dbReference>
<dbReference type="PANTHER" id="PTHR10291">
    <property type="entry name" value="DEHYDRODOLICHYL DIPHOSPHATE SYNTHASE FAMILY MEMBER"/>
    <property type="match status" value="1"/>
</dbReference>
<dbReference type="Pfam" id="PF01255">
    <property type="entry name" value="Prenyltransf"/>
    <property type="match status" value="1"/>
</dbReference>
<dbReference type="SUPFAM" id="SSF64005">
    <property type="entry name" value="Undecaprenyl diphosphate synthase"/>
    <property type="match status" value="1"/>
</dbReference>
<dbReference type="PROSITE" id="PS01066">
    <property type="entry name" value="UPP_SYNTHASE"/>
    <property type="match status" value="1"/>
</dbReference>
<sequence>MFKKLINKKNTINNYNEELDSSNIPEHIAIIMDGNGRWAKKRKMPRIKGHYEGMQTIKKITRVASDIGVKYLTLYAFSTENWSRPESEVNYIMNLPVNFLKTFLPELIEKNVKVETIGFTDKLPKSTIEAINNAKEKTANNTGLKLIFAINYGGRAELVHSIKNMFDELHQQGLNSDIIDETYINNHLMTKDYPDPELLIRTSGEQRISNFLIWQVSYSEFIFNQKLWPDFDEDELIKCIKIYQSRQRRFGGLSEE</sequence>
<gene>
    <name evidence="1" type="primary">uppS</name>
    <name type="ordered locus">SAR1236</name>
</gene>
<accession>Q6GHH5</accession>